<name>UVRB_MYCUA</name>
<accession>A0PP48</accession>
<organism>
    <name type="scientific">Mycobacterium ulcerans (strain Agy99)</name>
    <dbReference type="NCBI Taxonomy" id="362242"/>
    <lineage>
        <taxon>Bacteria</taxon>
        <taxon>Bacillati</taxon>
        <taxon>Actinomycetota</taxon>
        <taxon>Actinomycetes</taxon>
        <taxon>Mycobacteriales</taxon>
        <taxon>Mycobacteriaceae</taxon>
        <taxon>Mycobacterium</taxon>
        <taxon>Mycobacterium ulcerans group</taxon>
    </lineage>
</organism>
<evidence type="ECO:0000255" key="1">
    <source>
        <dbReference type="HAMAP-Rule" id="MF_00204"/>
    </source>
</evidence>
<evidence type="ECO:0000256" key="2">
    <source>
        <dbReference type="SAM" id="MobiDB-lite"/>
    </source>
</evidence>
<dbReference type="EMBL" id="CP000325">
    <property type="protein sequence ID" value="ABL04117.1"/>
    <property type="molecule type" value="Genomic_DNA"/>
</dbReference>
<dbReference type="SMR" id="A0PP48"/>
<dbReference type="KEGG" id="mul:MUL_1616"/>
<dbReference type="eggNOG" id="COG0556">
    <property type="taxonomic scope" value="Bacteria"/>
</dbReference>
<dbReference type="HOGENOM" id="CLU_009621_2_1_11"/>
<dbReference type="Proteomes" id="UP000000765">
    <property type="component" value="Chromosome"/>
</dbReference>
<dbReference type="GO" id="GO:0005737">
    <property type="term" value="C:cytoplasm"/>
    <property type="evidence" value="ECO:0007669"/>
    <property type="project" value="UniProtKB-SubCell"/>
</dbReference>
<dbReference type="GO" id="GO:0009380">
    <property type="term" value="C:excinuclease repair complex"/>
    <property type="evidence" value="ECO:0007669"/>
    <property type="project" value="InterPro"/>
</dbReference>
<dbReference type="GO" id="GO:0005524">
    <property type="term" value="F:ATP binding"/>
    <property type="evidence" value="ECO:0007669"/>
    <property type="project" value="UniProtKB-UniRule"/>
</dbReference>
<dbReference type="GO" id="GO:0016887">
    <property type="term" value="F:ATP hydrolysis activity"/>
    <property type="evidence" value="ECO:0007669"/>
    <property type="project" value="InterPro"/>
</dbReference>
<dbReference type="GO" id="GO:0003677">
    <property type="term" value="F:DNA binding"/>
    <property type="evidence" value="ECO:0007669"/>
    <property type="project" value="UniProtKB-UniRule"/>
</dbReference>
<dbReference type="GO" id="GO:0009381">
    <property type="term" value="F:excinuclease ABC activity"/>
    <property type="evidence" value="ECO:0007669"/>
    <property type="project" value="UniProtKB-UniRule"/>
</dbReference>
<dbReference type="GO" id="GO:0004386">
    <property type="term" value="F:helicase activity"/>
    <property type="evidence" value="ECO:0007669"/>
    <property type="project" value="UniProtKB-KW"/>
</dbReference>
<dbReference type="GO" id="GO:0006289">
    <property type="term" value="P:nucleotide-excision repair"/>
    <property type="evidence" value="ECO:0007669"/>
    <property type="project" value="UniProtKB-UniRule"/>
</dbReference>
<dbReference type="GO" id="GO:0009432">
    <property type="term" value="P:SOS response"/>
    <property type="evidence" value="ECO:0007669"/>
    <property type="project" value="UniProtKB-UniRule"/>
</dbReference>
<dbReference type="CDD" id="cd17916">
    <property type="entry name" value="DEXHc_UvrB"/>
    <property type="match status" value="1"/>
</dbReference>
<dbReference type="CDD" id="cd18790">
    <property type="entry name" value="SF2_C_UvrB"/>
    <property type="match status" value="1"/>
</dbReference>
<dbReference type="FunFam" id="3.40.50.300:FF:000257">
    <property type="entry name" value="UvrABC system protein B"/>
    <property type="match status" value="1"/>
</dbReference>
<dbReference type="FunFam" id="3.40.50.300:FF:000401">
    <property type="entry name" value="UvrABC system protein B"/>
    <property type="match status" value="1"/>
</dbReference>
<dbReference type="FunFam" id="3.40.50.300:FF:000477">
    <property type="entry name" value="UvrABC system protein B"/>
    <property type="match status" value="1"/>
</dbReference>
<dbReference type="FunFam" id="4.10.860.10:FF:000009">
    <property type="entry name" value="UvrABC system protein B"/>
    <property type="match status" value="1"/>
</dbReference>
<dbReference type="Gene3D" id="3.40.50.300">
    <property type="entry name" value="P-loop containing nucleotide triphosphate hydrolases"/>
    <property type="match status" value="3"/>
</dbReference>
<dbReference type="Gene3D" id="4.10.860.10">
    <property type="entry name" value="UVR domain"/>
    <property type="match status" value="1"/>
</dbReference>
<dbReference type="HAMAP" id="MF_00204">
    <property type="entry name" value="UvrB"/>
    <property type="match status" value="1"/>
</dbReference>
<dbReference type="InterPro" id="IPR006935">
    <property type="entry name" value="Helicase/UvrB_N"/>
</dbReference>
<dbReference type="InterPro" id="IPR014001">
    <property type="entry name" value="Helicase_ATP-bd"/>
</dbReference>
<dbReference type="InterPro" id="IPR001650">
    <property type="entry name" value="Helicase_C-like"/>
</dbReference>
<dbReference type="InterPro" id="IPR027417">
    <property type="entry name" value="P-loop_NTPase"/>
</dbReference>
<dbReference type="InterPro" id="IPR001943">
    <property type="entry name" value="UVR_dom"/>
</dbReference>
<dbReference type="InterPro" id="IPR036876">
    <property type="entry name" value="UVR_dom_sf"/>
</dbReference>
<dbReference type="InterPro" id="IPR004807">
    <property type="entry name" value="UvrB"/>
</dbReference>
<dbReference type="InterPro" id="IPR041471">
    <property type="entry name" value="UvrB_inter"/>
</dbReference>
<dbReference type="InterPro" id="IPR024759">
    <property type="entry name" value="UvrB_YAD/RRR_dom"/>
</dbReference>
<dbReference type="NCBIfam" id="NF003673">
    <property type="entry name" value="PRK05298.1"/>
    <property type="match status" value="1"/>
</dbReference>
<dbReference type="NCBIfam" id="TIGR00631">
    <property type="entry name" value="uvrb"/>
    <property type="match status" value="1"/>
</dbReference>
<dbReference type="PANTHER" id="PTHR24029">
    <property type="entry name" value="UVRABC SYSTEM PROTEIN B"/>
    <property type="match status" value="1"/>
</dbReference>
<dbReference type="PANTHER" id="PTHR24029:SF0">
    <property type="entry name" value="UVRABC SYSTEM PROTEIN B"/>
    <property type="match status" value="1"/>
</dbReference>
<dbReference type="Pfam" id="PF00271">
    <property type="entry name" value="Helicase_C"/>
    <property type="match status" value="1"/>
</dbReference>
<dbReference type="Pfam" id="PF04851">
    <property type="entry name" value="ResIII"/>
    <property type="match status" value="1"/>
</dbReference>
<dbReference type="Pfam" id="PF02151">
    <property type="entry name" value="UVR"/>
    <property type="match status" value="1"/>
</dbReference>
<dbReference type="Pfam" id="PF12344">
    <property type="entry name" value="UvrB"/>
    <property type="match status" value="1"/>
</dbReference>
<dbReference type="Pfam" id="PF17757">
    <property type="entry name" value="UvrB_inter"/>
    <property type="match status" value="1"/>
</dbReference>
<dbReference type="SMART" id="SM00487">
    <property type="entry name" value="DEXDc"/>
    <property type="match status" value="1"/>
</dbReference>
<dbReference type="SMART" id="SM00490">
    <property type="entry name" value="HELICc"/>
    <property type="match status" value="1"/>
</dbReference>
<dbReference type="SUPFAM" id="SSF46600">
    <property type="entry name" value="C-terminal UvrC-binding domain of UvrB"/>
    <property type="match status" value="1"/>
</dbReference>
<dbReference type="SUPFAM" id="SSF52540">
    <property type="entry name" value="P-loop containing nucleoside triphosphate hydrolases"/>
    <property type="match status" value="2"/>
</dbReference>
<dbReference type="PROSITE" id="PS51192">
    <property type="entry name" value="HELICASE_ATP_BIND_1"/>
    <property type="match status" value="1"/>
</dbReference>
<dbReference type="PROSITE" id="PS51194">
    <property type="entry name" value="HELICASE_CTER"/>
    <property type="match status" value="1"/>
</dbReference>
<dbReference type="PROSITE" id="PS50151">
    <property type="entry name" value="UVR"/>
    <property type="match status" value="1"/>
</dbReference>
<keyword id="KW-0067">ATP-binding</keyword>
<keyword id="KW-0963">Cytoplasm</keyword>
<keyword id="KW-0227">DNA damage</keyword>
<keyword id="KW-0228">DNA excision</keyword>
<keyword id="KW-0234">DNA repair</keyword>
<keyword id="KW-0267">Excision nuclease</keyword>
<keyword id="KW-0347">Helicase</keyword>
<keyword id="KW-0378">Hydrolase</keyword>
<keyword id="KW-0547">Nucleotide-binding</keyword>
<keyword id="KW-0742">SOS response</keyword>
<protein>
    <recommendedName>
        <fullName evidence="1">UvrABC system protein B</fullName>
        <shortName evidence="1">Protein UvrB</shortName>
    </recommendedName>
    <alternativeName>
        <fullName evidence="1">Excinuclease ABC subunit B</fullName>
    </alternativeName>
</protein>
<comment type="function">
    <text evidence="1">The UvrABC repair system catalyzes the recognition and processing of DNA lesions. A damage recognition complex composed of 2 UvrA and 2 UvrB subunits scans DNA for abnormalities. Upon binding of the UvrA(2)B(2) complex to a putative damaged site, the DNA wraps around one UvrB monomer. DNA wrap is dependent on ATP binding by UvrB and probably causes local melting of the DNA helix, facilitating insertion of UvrB beta-hairpin between the DNA strands. Then UvrB probes one DNA strand for the presence of a lesion. If a lesion is found the UvrA subunits dissociate and the UvrB-DNA preincision complex is formed. This complex is subsequently bound by UvrC and the second UvrB is released. If no lesion is found, the DNA wraps around the other UvrB subunit that will check the other stand for damage.</text>
</comment>
<comment type="subunit">
    <text evidence="1">Forms a heterotetramer with UvrA during the search for lesions. Interacts with UvrC in an incision complex.</text>
</comment>
<comment type="subcellular location">
    <subcellularLocation>
        <location evidence="1">Cytoplasm</location>
    </subcellularLocation>
</comment>
<comment type="domain">
    <text evidence="1">The beta-hairpin motif is involved in DNA binding.</text>
</comment>
<comment type="similarity">
    <text evidence="1">Belongs to the UvrB family.</text>
</comment>
<sequence>MRTGASFEVISPHDPAGDQPAAINELERRIRAGERDVVLLGATGTGKSATTAWLIERLQRPTLVMAPNKTLAAQLANELREMLPHNAVEYFVSYYDYYQPEAYIAQTDTYIEKDSSINDDVERLRHSATSALLSRRDVVVVASVSCIYGLGTPQSYLDRSVELQVGTDVPRDGLLRLLVDVQYTRNDLSFTRGSFRVRGDTVEIIPSYEDLAVRIEFFGDGIEALYYLHPLTGDVVRQVDSLRIFPATHYVAGPERMAQAISTIEEELAERLAELEGHGKLLEAHRLRMRTNYDIEMMRQVGFCSGIENYSRHIDGRPAGSAPATLLDYFPEDFLLVIDESHVTVPQIGGMYEGDISRKRNLVEFGFRLPSAVDNRPLQWEEFADRIGQTVYLSATPGPYELSQSGGEFVEQVIRPTGLVDPKVVVKPTKGQIDDLIGEIRQRAEVDQRVLVTTLTKKMAEDLTDYLLEMGIRVRYLHSEVDTLRRVELLRQLRLGEYDVLVGINLLREGLDLPEVSLVAILDADKEGFLRSARSLIQTIGRAARNVSGEVHMYADKITDSMKEAIDETERRRAKQVAYNEANGIDPQPLRKKIADILDQVYREADDTEAAESVPIGGSGRNSSRGRRAQGEPGRAVSAGVFEGRDTSTMPRAELADLIKDLTSQMMVAARDLQFELAARFRDEIADLKKELRGMDAAGLN</sequence>
<feature type="chain" id="PRO_1000077907" description="UvrABC system protein B">
    <location>
        <begin position="1"/>
        <end position="701"/>
    </location>
</feature>
<feature type="domain" description="Helicase ATP-binding" evidence="1">
    <location>
        <begin position="28"/>
        <end position="188"/>
    </location>
</feature>
<feature type="domain" description="Helicase C-terminal" evidence="1">
    <location>
        <begin position="432"/>
        <end position="598"/>
    </location>
</feature>
<feature type="domain" description="UVR" evidence="1">
    <location>
        <begin position="656"/>
        <end position="691"/>
    </location>
</feature>
<feature type="region of interest" description="Disordered" evidence="2">
    <location>
        <begin position="606"/>
        <end position="636"/>
    </location>
</feature>
<feature type="short sequence motif" description="Beta-hairpin">
    <location>
        <begin position="94"/>
        <end position="117"/>
    </location>
</feature>
<feature type="binding site" evidence="1">
    <location>
        <begin position="41"/>
        <end position="48"/>
    </location>
    <ligand>
        <name>ATP</name>
        <dbReference type="ChEBI" id="CHEBI:30616"/>
    </ligand>
</feature>
<reference key="1">
    <citation type="journal article" date="2007" name="Genome Res.">
        <title>Reductive evolution and niche adaptation inferred from the genome of Mycobacterium ulcerans, the causative agent of Buruli ulcer.</title>
        <authorList>
            <person name="Stinear T.P."/>
            <person name="Seemann T."/>
            <person name="Pidot S."/>
            <person name="Frigui W."/>
            <person name="Reysset G."/>
            <person name="Garnier T."/>
            <person name="Meurice G."/>
            <person name="Simon D."/>
            <person name="Bouchier C."/>
            <person name="Ma L."/>
            <person name="Tichit M."/>
            <person name="Porter J.L."/>
            <person name="Ryan J."/>
            <person name="Johnson P.D.R."/>
            <person name="Davies J.K."/>
            <person name="Jenkin G.A."/>
            <person name="Small P.L.C."/>
            <person name="Jones L.M."/>
            <person name="Tekaia F."/>
            <person name="Laval F."/>
            <person name="Daffe M."/>
            <person name="Parkhill J."/>
            <person name="Cole S.T."/>
        </authorList>
    </citation>
    <scope>NUCLEOTIDE SEQUENCE [LARGE SCALE GENOMIC DNA]</scope>
    <source>
        <strain>Agy99</strain>
    </source>
</reference>
<gene>
    <name evidence="1" type="primary">uvrB</name>
    <name type="ordered locus">MUL_1616</name>
</gene>
<proteinExistence type="inferred from homology"/>